<keyword id="KW-0963">Cytoplasm</keyword>
<keyword id="KW-0269">Exonuclease</keyword>
<keyword id="KW-0378">Hydrolase</keyword>
<keyword id="KW-0540">Nuclease</keyword>
<keyword id="KW-1185">Reference proteome</keyword>
<sequence length="416" mass="47011">MNVYTVSQLNEQIKNLLESHFVEVYVEGEVSRPTYHTSGHLYFSLKDEKSVIRCVMFRSALAKVPFRVEDGQKLIVAGKIGVYKPRGEYQLYATELHPSGVGSLQLAFEQLKAKLEKKGYFASELKKPLPDFIQTIALVTSQTGAALQDMLRIIQNRWPLVKVYVVDTLVQGSDAAPMIARSIAYADGLGVDVIVVGRGGGSLEDLWPFNEEIVADAIFEAKTPIVSAVGHEIDFLISDFVADLRAPTPSAAMEMILPDRQEMLMHLDLLMQRLTKRMQTILQLKTQELGHLQNSLFQLSPQKRLEFYEKEITIMNERMNETITAILKNSSHEIPHLKALFDQKIEWIWKQKKQDLTSLQQKLTMTMEAKKIPKNSAQMVKNGKPVSLEDIDVGDEVELQDVHYKALAKILSKDAL</sequence>
<proteinExistence type="inferred from homology"/>
<gene>
    <name evidence="1" type="primary">xseA</name>
    <name type="ordered locus">NIS_0427</name>
</gene>
<comment type="function">
    <text evidence="1">Bidirectionally degrades single-stranded DNA into large acid-insoluble oligonucleotides, which are then degraded further into small acid-soluble oligonucleotides.</text>
</comment>
<comment type="catalytic activity">
    <reaction evidence="1">
        <text>Exonucleolytic cleavage in either 5'- to 3'- or 3'- to 5'-direction to yield nucleoside 5'-phosphates.</text>
        <dbReference type="EC" id="3.1.11.6"/>
    </reaction>
</comment>
<comment type="subunit">
    <text evidence="1">Heterooligomer composed of large and small subunits.</text>
</comment>
<comment type="subcellular location">
    <subcellularLocation>
        <location evidence="1">Cytoplasm</location>
    </subcellularLocation>
</comment>
<comment type="similarity">
    <text evidence="1">Belongs to the XseA family.</text>
</comment>
<name>EX7L_NITSB</name>
<reference key="1">
    <citation type="journal article" date="2007" name="Proc. Natl. Acad. Sci. U.S.A.">
        <title>Deep-sea vent epsilon-proteobacterial genomes provide insights into emergence of pathogens.</title>
        <authorList>
            <person name="Nakagawa S."/>
            <person name="Takaki Y."/>
            <person name="Shimamura S."/>
            <person name="Reysenbach A.-L."/>
            <person name="Takai K."/>
            <person name="Horikoshi K."/>
        </authorList>
    </citation>
    <scope>NUCLEOTIDE SEQUENCE [LARGE SCALE GENOMIC DNA]</scope>
    <source>
        <strain>SB155-2</strain>
    </source>
</reference>
<accession>A6Q232</accession>
<dbReference type="EC" id="3.1.11.6" evidence="1"/>
<dbReference type="EMBL" id="AP009178">
    <property type="protein sequence ID" value="BAF69541.1"/>
    <property type="molecule type" value="Genomic_DNA"/>
</dbReference>
<dbReference type="RefSeq" id="WP_012081804.1">
    <property type="nucleotide sequence ID" value="NC_009662.1"/>
</dbReference>
<dbReference type="SMR" id="A6Q232"/>
<dbReference type="FunCoup" id="A6Q232">
    <property type="interactions" value="237"/>
</dbReference>
<dbReference type="STRING" id="387092.NIS_0427"/>
<dbReference type="KEGG" id="nis:NIS_0427"/>
<dbReference type="eggNOG" id="COG1570">
    <property type="taxonomic scope" value="Bacteria"/>
</dbReference>
<dbReference type="HOGENOM" id="CLU_023625_2_0_7"/>
<dbReference type="InParanoid" id="A6Q232"/>
<dbReference type="OrthoDB" id="9802795at2"/>
<dbReference type="Proteomes" id="UP000001118">
    <property type="component" value="Chromosome"/>
</dbReference>
<dbReference type="GO" id="GO:0005737">
    <property type="term" value="C:cytoplasm"/>
    <property type="evidence" value="ECO:0007669"/>
    <property type="project" value="UniProtKB-SubCell"/>
</dbReference>
<dbReference type="GO" id="GO:0009318">
    <property type="term" value="C:exodeoxyribonuclease VII complex"/>
    <property type="evidence" value="ECO:0007669"/>
    <property type="project" value="InterPro"/>
</dbReference>
<dbReference type="GO" id="GO:0008855">
    <property type="term" value="F:exodeoxyribonuclease VII activity"/>
    <property type="evidence" value="ECO:0007669"/>
    <property type="project" value="UniProtKB-UniRule"/>
</dbReference>
<dbReference type="GO" id="GO:0003676">
    <property type="term" value="F:nucleic acid binding"/>
    <property type="evidence" value="ECO:0007669"/>
    <property type="project" value="InterPro"/>
</dbReference>
<dbReference type="GO" id="GO:0006308">
    <property type="term" value="P:DNA catabolic process"/>
    <property type="evidence" value="ECO:0007669"/>
    <property type="project" value="UniProtKB-UniRule"/>
</dbReference>
<dbReference type="CDD" id="cd04489">
    <property type="entry name" value="ExoVII_LU_OBF"/>
    <property type="match status" value="1"/>
</dbReference>
<dbReference type="Gene3D" id="2.40.50.1010">
    <property type="match status" value="1"/>
</dbReference>
<dbReference type="HAMAP" id="MF_00378">
    <property type="entry name" value="Exonuc_7_L"/>
    <property type="match status" value="1"/>
</dbReference>
<dbReference type="InterPro" id="IPR003753">
    <property type="entry name" value="Exonuc_VII_L"/>
</dbReference>
<dbReference type="InterPro" id="IPR020579">
    <property type="entry name" value="Exonuc_VII_lsu_C"/>
</dbReference>
<dbReference type="InterPro" id="IPR025824">
    <property type="entry name" value="OB-fold_nuc-bd_dom"/>
</dbReference>
<dbReference type="NCBIfam" id="TIGR00237">
    <property type="entry name" value="xseA"/>
    <property type="match status" value="1"/>
</dbReference>
<dbReference type="PANTHER" id="PTHR30008">
    <property type="entry name" value="EXODEOXYRIBONUCLEASE 7 LARGE SUBUNIT"/>
    <property type="match status" value="1"/>
</dbReference>
<dbReference type="PANTHER" id="PTHR30008:SF0">
    <property type="entry name" value="EXODEOXYRIBONUCLEASE 7 LARGE SUBUNIT"/>
    <property type="match status" value="1"/>
</dbReference>
<dbReference type="Pfam" id="PF02601">
    <property type="entry name" value="Exonuc_VII_L"/>
    <property type="match status" value="1"/>
</dbReference>
<dbReference type="Pfam" id="PF13742">
    <property type="entry name" value="tRNA_anti_2"/>
    <property type="match status" value="1"/>
</dbReference>
<organism>
    <name type="scientific">Nitratiruptor sp. (strain SB155-2)</name>
    <dbReference type="NCBI Taxonomy" id="387092"/>
    <lineage>
        <taxon>Bacteria</taxon>
        <taxon>Pseudomonadati</taxon>
        <taxon>Campylobacterota</taxon>
        <taxon>Epsilonproteobacteria</taxon>
        <taxon>Nautiliales</taxon>
        <taxon>Nitratiruptoraceae</taxon>
        <taxon>Nitratiruptor</taxon>
    </lineage>
</organism>
<evidence type="ECO:0000255" key="1">
    <source>
        <dbReference type="HAMAP-Rule" id="MF_00378"/>
    </source>
</evidence>
<feature type="chain" id="PRO_1000048777" description="Exodeoxyribonuclease 7 large subunit">
    <location>
        <begin position="1"/>
        <end position="416"/>
    </location>
</feature>
<protein>
    <recommendedName>
        <fullName evidence="1">Exodeoxyribonuclease 7 large subunit</fullName>
        <ecNumber evidence="1">3.1.11.6</ecNumber>
    </recommendedName>
    <alternativeName>
        <fullName evidence="1">Exodeoxyribonuclease VII large subunit</fullName>
        <shortName evidence="1">Exonuclease VII large subunit</shortName>
    </alternativeName>
</protein>